<proteinExistence type="inferred from homology"/>
<keyword id="KW-0963">Cytoplasm</keyword>
<keyword id="KW-0378">Hydrolase</keyword>
<name>URE2_BACVZ</name>
<accession>A7Z9N5</accession>
<comment type="catalytic activity">
    <reaction evidence="1">
        <text>urea + 2 H2O + H(+) = hydrogencarbonate + 2 NH4(+)</text>
        <dbReference type="Rhea" id="RHEA:20557"/>
        <dbReference type="ChEBI" id="CHEBI:15377"/>
        <dbReference type="ChEBI" id="CHEBI:15378"/>
        <dbReference type="ChEBI" id="CHEBI:16199"/>
        <dbReference type="ChEBI" id="CHEBI:17544"/>
        <dbReference type="ChEBI" id="CHEBI:28938"/>
        <dbReference type="EC" id="3.5.1.5"/>
    </reaction>
</comment>
<comment type="pathway">
    <text evidence="1">Nitrogen metabolism; urea degradation; CO(2) and NH(3) from urea (urease route): step 1/1.</text>
</comment>
<comment type="subunit">
    <text evidence="1">Heterotrimer of UreA (gamma), UreB (beta) and UreC (alpha) subunits. Three heterotrimers associate to form the active enzyme.</text>
</comment>
<comment type="subcellular location">
    <subcellularLocation>
        <location evidence="1">Cytoplasm</location>
    </subcellularLocation>
</comment>
<comment type="similarity">
    <text evidence="1">Belongs to the urease beta subunit family.</text>
</comment>
<feature type="chain" id="PRO_1000070716" description="Urease subunit beta">
    <location>
        <begin position="1"/>
        <end position="124"/>
    </location>
</feature>
<gene>
    <name evidence="1" type="primary">ureB</name>
    <name type="ordered locus">RBAM_033820</name>
</gene>
<reference key="1">
    <citation type="journal article" date="2007" name="Nat. Biotechnol.">
        <title>Comparative analysis of the complete genome sequence of the plant growth-promoting bacterium Bacillus amyloliquefaciens FZB42.</title>
        <authorList>
            <person name="Chen X.H."/>
            <person name="Koumoutsi A."/>
            <person name="Scholz R."/>
            <person name="Eisenreich A."/>
            <person name="Schneider K."/>
            <person name="Heinemeyer I."/>
            <person name="Morgenstern B."/>
            <person name="Voss B."/>
            <person name="Hess W.R."/>
            <person name="Reva O."/>
            <person name="Junge H."/>
            <person name="Voigt B."/>
            <person name="Jungblut P.R."/>
            <person name="Vater J."/>
            <person name="Suessmuth R."/>
            <person name="Liesegang H."/>
            <person name="Strittmatter A."/>
            <person name="Gottschalk G."/>
            <person name="Borriss R."/>
        </authorList>
    </citation>
    <scope>NUCLEOTIDE SEQUENCE [LARGE SCALE GENOMIC DNA]</scope>
    <source>
        <strain>DSM 23117 / BGSC 10A6 / LMG 26770 / FZB42</strain>
    </source>
</reference>
<dbReference type="EC" id="3.5.1.5" evidence="1"/>
<dbReference type="EMBL" id="CP000560">
    <property type="protein sequence ID" value="ABS75711.1"/>
    <property type="molecule type" value="Genomic_DNA"/>
</dbReference>
<dbReference type="RefSeq" id="WP_012118652.1">
    <property type="nucleotide sequence ID" value="NC_009725.2"/>
</dbReference>
<dbReference type="SMR" id="A7Z9N5"/>
<dbReference type="GeneID" id="93082526"/>
<dbReference type="KEGG" id="bay:RBAM_033820"/>
<dbReference type="HOGENOM" id="CLU_129707_2_1_9"/>
<dbReference type="UniPathway" id="UPA00258">
    <property type="reaction ID" value="UER00370"/>
</dbReference>
<dbReference type="Proteomes" id="UP000001120">
    <property type="component" value="Chromosome"/>
</dbReference>
<dbReference type="GO" id="GO:0035550">
    <property type="term" value="C:urease complex"/>
    <property type="evidence" value="ECO:0007669"/>
    <property type="project" value="InterPro"/>
</dbReference>
<dbReference type="GO" id="GO:0009039">
    <property type="term" value="F:urease activity"/>
    <property type="evidence" value="ECO:0007669"/>
    <property type="project" value="UniProtKB-UniRule"/>
</dbReference>
<dbReference type="GO" id="GO:0043419">
    <property type="term" value="P:urea catabolic process"/>
    <property type="evidence" value="ECO:0007669"/>
    <property type="project" value="UniProtKB-UniRule"/>
</dbReference>
<dbReference type="CDD" id="cd00407">
    <property type="entry name" value="Urease_beta"/>
    <property type="match status" value="1"/>
</dbReference>
<dbReference type="FunFam" id="2.10.150.10:FF:000001">
    <property type="entry name" value="Urease subunit beta"/>
    <property type="match status" value="1"/>
</dbReference>
<dbReference type="Gene3D" id="2.10.150.10">
    <property type="entry name" value="Urease, beta subunit"/>
    <property type="match status" value="1"/>
</dbReference>
<dbReference type="HAMAP" id="MF_01954">
    <property type="entry name" value="Urease_beta"/>
    <property type="match status" value="1"/>
</dbReference>
<dbReference type="InterPro" id="IPR002019">
    <property type="entry name" value="Urease_beta-like"/>
</dbReference>
<dbReference type="InterPro" id="IPR036461">
    <property type="entry name" value="Urease_betasu_sf"/>
</dbReference>
<dbReference type="InterPro" id="IPR050069">
    <property type="entry name" value="Urease_subunit"/>
</dbReference>
<dbReference type="NCBIfam" id="NF009682">
    <property type="entry name" value="PRK13203.1"/>
    <property type="match status" value="1"/>
</dbReference>
<dbReference type="NCBIfam" id="TIGR00192">
    <property type="entry name" value="urease_beta"/>
    <property type="match status" value="1"/>
</dbReference>
<dbReference type="PANTHER" id="PTHR33569">
    <property type="entry name" value="UREASE"/>
    <property type="match status" value="1"/>
</dbReference>
<dbReference type="PANTHER" id="PTHR33569:SF1">
    <property type="entry name" value="UREASE"/>
    <property type="match status" value="1"/>
</dbReference>
<dbReference type="Pfam" id="PF00699">
    <property type="entry name" value="Urease_beta"/>
    <property type="match status" value="1"/>
</dbReference>
<dbReference type="SUPFAM" id="SSF51278">
    <property type="entry name" value="Urease, beta-subunit"/>
    <property type="match status" value="1"/>
</dbReference>
<sequence length="124" mass="13506">MKPGAIQVAKGIITINEGRKTLEVSVTNNGTRSVQVGSHFHFAEANGALSFNRDKAIGMRLDIPSGTSVRFEPGEEKTVTLVEIGGRKTVRGLNGMADTYMDERGKEKTLSNLKKAGWMEEAIR</sequence>
<protein>
    <recommendedName>
        <fullName evidence="1">Urease subunit beta</fullName>
        <ecNumber evidence="1">3.5.1.5</ecNumber>
    </recommendedName>
    <alternativeName>
        <fullName evidence="1">Urea amidohydrolase subunit beta</fullName>
    </alternativeName>
</protein>
<organism>
    <name type="scientific">Bacillus velezensis (strain DSM 23117 / BGSC 10A6 / LMG 26770 / FZB42)</name>
    <name type="common">Bacillus amyloliquefaciens subsp. plantarum</name>
    <dbReference type="NCBI Taxonomy" id="326423"/>
    <lineage>
        <taxon>Bacteria</taxon>
        <taxon>Bacillati</taxon>
        <taxon>Bacillota</taxon>
        <taxon>Bacilli</taxon>
        <taxon>Bacillales</taxon>
        <taxon>Bacillaceae</taxon>
        <taxon>Bacillus</taxon>
        <taxon>Bacillus amyloliquefaciens group</taxon>
    </lineage>
</organism>
<evidence type="ECO:0000255" key="1">
    <source>
        <dbReference type="HAMAP-Rule" id="MF_01954"/>
    </source>
</evidence>